<organism>
    <name type="scientific">Mycobacterium leprae (strain TN)</name>
    <dbReference type="NCBI Taxonomy" id="272631"/>
    <lineage>
        <taxon>Bacteria</taxon>
        <taxon>Bacillati</taxon>
        <taxon>Actinomycetota</taxon>
        <taxon>Actinomycetes</taxon>
        <taxon>Mycobacteriales</taxon>
        <taxon>Mycobacteriaceae</taxon>
        <taxon>Mycobacterium</taxon>
    </lineage>
</organism>
<feature type="chain" id="PRO_0000167812" description="ESAT-6-like protein EsxR">
    <location>
        <begin position="1"/>
        <end position="96"/>
    </location>
</feature>
<dbReference type="EMBL" id="AL583926">
    <property type="protein sequence ID" value="CAC32062.1"/>
    <property type="molecule type" value="Genomic_DNA"/>
</dbReference>
<dbReference type="PIR" id="H87225">
    <property type="entry name" value="H87225"/>
</dbReference>
<dbReference type="RefSeq" id="NP_302626.1">
    <property type="nucleotide sequence ID" value="NC_002677.1"/>
</dbReference>
<dbReference type="RefSeq" id="WP_010908945.1">
    <property type="nucleotide sequence ID" value="NC_002677.1"/>
</dbReference>
<dbReference type="SMR" id="Q9CD33"/>
<dbReference type="STRING" id="272631.gene:17576396"/>
<dbReference type="KEGG" id="mle:ML2531"/>
<dbReference type="PATRIC" id="fig|272631.5.peg.4862"/>
<dbReference type="Leproma" id="ML2531"/>
<dbReference type="eggNOG" id="COG4842">
    <property type="taxonomic scope" value="Bacteria"/>
</dbReference>
<dbReference type="HOGENOM" id="CLU_2451485_0_0_11"/>
<dbReference type="OrthoDB" id="4738087at2"/>
<dbReference type="Proteomes" id="UP000000806">
    <property type="component" value="Chromosome"/>
</dbReference>
<dbReference type="GO" id="GO:0005576">
    <property type="term" value="C:extracellular region"/>
    <property type="evidence" value="ECO:0007669"/>
    <property type="project" value="UniProtKB-SubCell"/>
</dbReference>
<dbReference type="Gene3D" id="1.10.287.1060">
    <property type="entry name" value="ESAT-6-like"/>
    <property type="match status" value="1"/>
</dbReference>
<dbReference type="InterPro" id="IPR036689">
    <property type="entry name" value="ESAT-6-like_sf"/>
</dbReference>
<dbReference type="InterPro" id="IPR010310">
    <property type="entry name" value="T7SS_ESAT-6-like"/>
</dbReference>
<dbReference type="NCBIfam" id="TIGR03930">
    <property type="entry name" value="WXG100_ESAT6"/>
    <property type="match status" value="1"/>
</dbReference>
<dbReference type="Pfam" id="PF06013">
    <property type="entry name" value="WXG100"/>
    <property type="match status" value="1"/>
</dbReference>
<dbReference type="SUPFAM" id="SSF140453">
    <property type="entry name" value="EsxAB dimer-like"/>
    <property type="match status" value="1"/>
</dbReference>
<proteinExistence type="inferred from homology"/>
<evidence type="ECO:0000250" key="1">
    <source>
        <dbReference type="UniProtKB" id="P9WNI9"/>
    </source>
</evidence>
<evidence type="ECO:0000305" key="2"/>
<name>ESXR_MYCLE</name>
<reference key="1">
    <citation type="journal article" date="2001" name="Nature">
        <title>Massive gene decay in the leprosy bacillus.</title>
        <authorList>
            <person name="Cole S.T."/>
            <person name="Eiglmeier K."/>
            <person name="Parkhill J."/>
            <person name="James K.D."/>
            <person name="Thomson N.R."/>
            <person name="Wheeler P.R."/>
            <person name="Honore N."/>
            <person name="Garnier T."/>
            <person name="Churcher C.M."/>
            <person name="Harris D.E."/>
            <person name="Mungall K.L."/>
            <person name="Basham D."/>
            <person name="Brown D."/>
            <person name="Chillingworth T."/>
            <person name="Connor R."/>
            <person name="Davies R.M."/>
            <person name="Devlin K."/>
            <person name="Duthoy S."/>
            <person name="Feltwell T."/>
            <person name="Fraser A."/>
            <person name="Hamlin N."/>
            <person name="Holroyd S."/>
            <person name="Hornsby T."/>
            <person name="Jagels K."/>
            <person name="Lacroix C."/>
            <person name="Maclean J."/>
            <person name="Moule S."/>
            <person name="Murphy L.D."/>
            <person name="Oliver K."/>
            <person name="Quail M.A."/>
            <person name="Rajandream M.A."/>
            <person name="Rutherford K.M."/>
            <person name="Rutter S."/>
            <person name="Seeger K."/>
            <person name="Simon S."/>
            <person name="Simmonds M."/>
            <person name="Skelton J."/>
            <person name="Squares R."/>
            <person name="Squares S."/>
            <person name="Stevens K."/>
            <person name="Taylor K."/>
            <person name="Whitehead S."/>
            <person name="Woodward J.R."/>
            <person name="Barrell B.G."/>
        </authorList>
    </citation>
    <scope>NUCLEOTIDE SEQUENCE [LARGE SCALE GENOMIC DNA]</scope>
    <source>
        <strain>TN</strain>
    </source>
</reference>
<protein>
    <recommendedName>
        <fullName evidence="1">ESAT-6-like protein EsxR</fullName>
    </recommendedName>
</protein>
<comment type="subcellular location">
    <subcellularLocation>
        <location evidence="1">Secreted</location>
    </subcellularLocation>
    <text evidence="1">Probably secreted via the ESX-3 / type VII secretion system (T7SS).</text>
</comment>
<comment type="similarity">
    <text evidence="2">Belongs to the WXG100 family. ESAT-6 subfamily.</text>
</comment>
<accession>Q9CD33</accession>
<gene>
    <name evidence="1" type="primary">esxR</name>
    <name type="ordered locus">ML2531</name>
</gene>
<sequence length="96" mass="10393">MTQIMYNYPAMLDHAGNMSACAGALQGVGIDIAAEQAALQACWGGDTGISYQAWQVQWNQATEEMVRAYHAMANTHQNNTLAMLTRDQAEAAKWGG</sequence>
<keyword id="KW-1185">Reference proteome</keyword>
<keyword id="KW-0964">Secreted</keyword>